<evidence type="ECO:0000255" key="1">
    <source>
        <dbReference type="HAMAP-Rule" id="MF_01307"/>
    </source>
</evidence>
<evidence type="ECO:0000305" key="2"/>
<organism>
    <name type="scientific">Burkholderia pseudomallei (strain 1106a)</name>
    <dbReference type="NCBI Taxonomy" id="357348"/>
    <lineage>
        <taxon>Bacteria</taxon>
        <taxon>Pseudomonadati</taxon>
        <taxon>Pseudomonadota</taxon>
        <taxon>Betaproteobacteria</taxon>
        <taxon>Burkholderiales</taxon>
        <taxon>Burkholderiaceae</taxon>
        <taxon>Burkholderia</taxon>
        <taxon>pseudomallei group</taxon>
    </lineage>
</organism>
<dbReference type="EMBL" id="CP000572">
    <property type="protein sequence ID" value="ABN92324.1"/>
    <property type="molecule type" value="Genomic_DNA"/>
</dbReference>
<dbReference type="RefSeq" id="WP_004197945.1">
    <property type="nucleotide sequence ID" value="NC_009076.1"/>
</dbReference>
<dbReference type="SMR" id="A3P096"/>
<dbReference type="GeneID" id="93126536"/>
<dbReference type="KEGG" id="bpl:BURPS1106A_3787"/>
<dbReference type="HOGENOM" id="CLU_065898_2_2_4"/>
<dbReference type="Proteomes" id="UP000006738">
    <property type="component" value="Chromosome I"/>
</dbReference>
<dbReference type="GO" id="GO:0015935">
    <property type="term" value="C:small ribosomal subunit"/>
    <property type="evidence" value="ECO:0007669"/>
    <property type="project" value="InterPro"/>
</dbReference>
<dbReference type="GO" id="GO:0019843">
    <property type="term" value="F:rRNA binding"/>
    <property type="evidence" value="ECO:0007669"/>
    <property type="project" value="UniProtKB-UniRule"/>
</dbReference>
<dbReference type="GO" id="GO:0003735">
    <property type="term" value="F:structural constituent of ribosome"/>
    <property type="evidence" value="ECO:0007669"/>
    <property type="project" value="InterPro"/>
</dbReference>
<dbReference type="GO" id="GO:0006412">
    <property type="term" value="P:translation"/>
    <property type="evidence" value="ECO:0007669"/>
    <property type="project" value="UniProtKB-UniRule"/>
</dbReference>
<dbReference type="FunFam" id="3.30.160.20:FF:000001">
    <property type="entry name" value="30S ribosomal protein S5"/>
    <property type="match status" value="1"/>
</dbReference>
<dbReference type="FunFam" id="3.30.230.10:FF:000002">
    <property type="entry name" value="30S ribosomal protein S5"/>
    <property type="match status" value="1"/>
</dbReference>
<dbReference type="Gene3D" id="3.30.160.20">
    <property type="match status" value="1"/>
</dbReference>
<dbReference type="Gene3D" id="3.30.230.10">
    <property type="match status" value="1"/>
</dbReference>
<dbReference type="HAMAP" id="MF_01307_B">
    <property type="entry name" value="Ribosomal_uS5_B"/>
    <property type="match status" value="1"/>
</dbReference>
<dbReference type="InterPro" id="IPR020568">
    <property type="entry name" value="Ribosomal_Su5_D2-typ_SF"/>
</dbReference>
<dbReference type="InterPro" id="IPR000851">
    <property type="entry name" value="Ribosomal_uS5"/>
</dbReference>
<dbReference type="InterPro" id="IPR005712">
    <property type="entry name" value="Ribosomal_uS5_bac-type"/>
</dbReference>
<dbReference type="InterPro" id="IPR005324">
    <property type="entry name" value="Ribosomal_uS5_C"/>
</dbReference>
<dbReference type="InterPro" id="IPR013810">
    <property type="entry name" value="Ribosomal_uS5_N"/>
</dbReference>
<dbReference type="InterPro" id="IPR018192">
    <property type="entry name" value="Ribosomal_uS5_N_CS"/>
</dbReference>
<dbReference type="InterPro" id="IPR014721">
    <property type="entry name" value="Ribsml_uS5_D2-typ_fold_subgr"/>
</dbReference>
<dbReference type="NCBIfam" id="TIGR01021">
    <property type="entry name" value="rpsE_bact"/>
    <property type="match status" value="1"/>
</dbReference>
<dbReference type="PANTHER" id="PTHR48277">
    <property type="entry name" value="MITOCHONDRIAL RIBOSOMAL PROTEIN S5"/>
    <property type="match status" value="1"/>
</dbReference>
<dbReference type="PANTHER" id="PTHR48277:SF1">
    <property type="entry name" value="MITOCHONDRIAL RIBOSOMAL PROTEIN S5"/>
    <property type="match status" value="1"/>
</dbReference>
<dbReference type="Pfam" id="PF00333">
    <property type="entry name" value="Ribosomal_S5"/>
    <property type="match status" value="1"/>
</dbReference>
<dbReference type="Pfam" id="PF03719">
    <property type="entry name" value="Ribosomal_S5_C"/>
    <property type="match status" value="1"/>
</dbReference>
<dbReference type="SUPFAM" id="SSF54768">
    <property type="entry name" value="dsRNA-binding domain-like"/>
    <property type="match status" value="1"/>
</dbReference>
<dbReference type="SUPFAM" id="SSF54211">
    <property type="entry name" value="Ribosomal protein S5 domain 2-like"/>
    <property type="match status" value="1"/>
</dbReference>
<dbReference type="PROSITE" id="PS00585">
    <property type="entry name" value="RIBOSOMAL_S5"/>
    <property type="match status" value="1"/>
</dbReference>
<dbReference type="PROSITE" id="PS50881">
    <property type="entry name" value="S5_DSRBD"/>
    <property type="match status" value="1"/>
</dbReference>
<feature type="chain" id="PRO_0000323090" description="Small ribosomal subunit protein uS5">
    <location>
        <begin position="1"/>
        <end position="172"/>
    </location>
</feature>
<feature type="domain" description="S5 DRBM" evidence="1">
    <location>
        <begin position="17"/>
        <end position="80"/>
    </location>
</feature>
<protein>
    <recommendedName>
        <fullName evidence="1">Small ribosomal subunit protein uS5</fullName>
    </recommendedName>
    <alternativeName>
        <fullName evidence="2">30S ribosomal protein S5</fullName>
    </alternativeName>
</protein>
<reference key="1">
    <citation type="journal article" date="2010" name="Genome Biol. Evol.">
        <title>Continuing evolution of Burkholderia mallei through genome reduction and large-scale rearrangements.</title>
        <authorList>
            <person name="Losada L."/>
            <person name="Ronning C.M."/>
            <person name="DeShazer D."/>
            <person name="Woods D."/>
            <person name="Fedorova N."/>
            <person name="Kim H.S."/>
            <person name="Shabalina S.A."/>
            <person name="Pearson T.R."/>
            <person name="Brinkac L."/>
            <person name="Tan P."/>
            <person name="Nandi T."/>
            <person name="Crabtree J."/>
            <person name="Badger J."/>
            <person name="Beckstrom-Sternberg S."/>
            <person name="Saqib M."/>
            <person name="Schutzer S.E."/>
            <person name="Keim P."/>
            <person name="Nierman W.C."/>
        </authorList>
    </citation>
    <scope>NUCLEOTIDE SEQUENCE [LARGE SCALE GENOMIC DNA]</scope>
    <source>
        <strain>1106a</strain>
    </source>
</reference>
<gene>
    <name evidence="1" type="primary">rpsE</name>
    <name type="ordered locus">BURPS1106A_3787</name>
</gene>
<sequence>MAKMQAKVQADERDDGLREKMISVNRVTKVVKGGRILGFAALTVVGDGDGRVGMGKGKAKEVPVAVQKAMEQARRNMFKVPLKNGTLQHEVHGKHGASTVLLAPAKDGTGVIAGGPMRAVFDVMGVQNVVAKSHGSTNPYNLVRATLDGLRKQSTPADIAAKRGKSVEEILG</sequence>
<comment type="function">
    <text evidence="1">With S4 and S12 plays an important role in translational accuracy.</text>
</comment>
<comment type="function">
    <text evidence="1">Located at the back of the 30S subunit body where it stabilizes the conformation of the head with respect to the body.</text>
</comment>
<comment type="subunit">
    <text evidence="1">Part of the 30S ribosomal subunit. Contacts proteins S4 and S8.</text>
</comment>
<comment type="domain">
    <text>The N-terminal domain interacts with the head of the 30S subunit; the C-terminal domain interacts with the body and contacts protein S4. The interaction surface between S4 and S5 is involved in control of translational fidelity.</text>
</comment>
<comment type="similarity">
    <text evidence="1">Belongs to the universal ribosomal protein uS5 family.</text>
</comment>
<accession>A3P096</accession>
<keyword id="KW-0687">Ribonucleoprotein</keyword>
<keyword id="KW-0689">Ribosomal protein</keyword>
<keyword id="KW-0694">RNA-binding</keyword>
<keyword id="KW-0699">rRNA-binding</keyword>
<name>RS5_BURP0</name>
<proteinExistence type="inferred from homology"/>